<organismHost>
    <name type="scientific">Homo sapiens</name>
    <name type="common">Human</name>
    <dbReference type="NCBI Taxonomy" id="9606"/>
</organismHost>
<proteinExistence type="inferred from homology"/>
<accession>O91083</accession>
<keyword id="KW-0007">Acetylation</keyword>
<keyword id="KW-0010">Activator</keyword>
<keyword id="KW-0014">AIDS</keyword>
<keyword id="KW-0025">Alternative splicing</keyword>
<keyword id="KW-0053">Apoptosis</keyword>
<keyword id="KW-1035">Host cytoplasm</keyword>
<keyword id="KW-1048">Host nucleus</keyword>
<keyword id="KW-0945">Host-virus interaction</keyword>
<keyword id="KW-1090">Inhibition of host innate immune response by virus</keyword>
<keyword id="KW-1114">Inhibition of host interferon signaling pathway by virus</keyword>
<keyword id="KW-0922">Interferon antiviral system evasion</keyword>
<keyword id="KW-1017">Isopeptide bond</keyword>
<keyword id="KW-0479">Metal-binding</keyword>
<keyword id="KW-0488">Methylation</keyword>
<keyword id="KW-1122">Modulation of host chromatin by virus</keyword>
<keyword id="KW-1126">Modulation of host PP1 activity by virus</keyword>
<keyword id="KW-0597">Phosphoprotein</keyword>
<keyword id="KW-1185">Reference proteome</keyword>
<keyword id="KW-0694">RNA-binding</keyword>
<keyword id="KW-0964">Secreted</keyword>
<keyword id="KW-0804">Transcription</keyword>
<keyword id="KW-0805">Transcription regulation</keyword>
<keyword id="KW-0832">Ubl conjugation</keyword>
<keyword id="KW-0899">Viral immunoevasion</keyword>
<keyword id="KW-0862">Zinc</keyword>
<name>TAT_HV1YF</name>
<organism>
    <name type="scientific">Human immunodeficiency virus type 1 group N (isolate YBF30)</name>
    <name type="common">HIV-1</name>
    <dbReference type="NCBI Taxonomy" id="388818"/>
    <lineage>
        <taxon>Viruses</taxon>
        <taxon>Riboviria</taxon>
        <taxon>Pararnavirae</taxon>
        <taxon>Artverviricota</taxon>
        <taxon>Revtraviricetes</taxon>
        <taxon>Ortervirales</taxon>
        <taxon>Retroviridae</taxon>
        <taxon>Orthoretrovirinae</taxon>
        <taxon>Lentivirus</taxon>
        <taxon>Human immunodeficiency virus type 1</taxon>
    </lineage>
</organism>
<gene>
    <name evidence="1" type="primary">tat</name>
</gene>
<reference key="1">
    <citation type="journal article" date="1998" name="Nat. Med.">
        <title>Identification of a new human immunodeficiency virus type 1 distinct from group M and group O.</title>
        <authorList>
            <person name="Simon F."/>
            <person name="Mauclere P."/>
            <person name="Roques P."/>
            <person name="Loussert-Ajaka I."/>
            <person name="Muller-Trutwin M.C."/>
            <person name="Saragosti S."/>
            <person name="Georges-Courbot M.C."/>
            <person name="Barre-Sinoussi F."/>
            <person name="Brun-Vezinet F."/>
        </authorList>
    </citation>
    <scope>NUCLEOTIDE SEQUENCE [GENOMIC DNA]</scope>
</reference>
<reference key="2">
    <citation type="journal article" date="2005" name="Microbes Infect.">
        <title>Decoding Tat: the biology of HIV Tat posttranslational modifications.</title>
        <authorList>
            <person name="Hetzer C."/>
            <person name="Dormeyer W."/>
            <person name="Schnolzer M."/>
            <person name="Ott M."/>
        </authorList>
    </citation>
    <scope>REVIEW</scope>
    <scope>ALTERNATIVE SPLICING</scope>
</reference>
<reference key="3">
    <citation type="journal article" date="2006" name="Front. Biosci.">
        <title>The multiple functions of HIV-1 Tat: proliferation versus apoptosis.</title>
        <authorList>
            <person name="Peruzzi F."/>
        </authorList>
    </citation>
    <scope>REVIEW</scope>
</reference>
<reference key="4">
    <citation type="journal article" date="2006" name="Microbes Infect.">
        <title>HIV tat and neurotoxicity.</title>
        <authorList>
            <person name="King J.E."/>
            <person name="Eugenin E.A."/>
            <person name="Buckner C.M."/>
            <person name="Berman J.W."/>
        </authorList>
    </citation>
    <scope>REVIEW</scope>
</reference>
<protein>
    <recommendedName>
        <fullName evidence="1">Protein Tat</fullName>
    </recommendedName>
    <alternativeName>
        <fullName evidence="1">Transactivating regulatory protein</fullName>
    </alternativeName>
</protein>
<sequence>MEPVDPRLEPWNHPGSQPKTACNNCYCKRCCYHCLYCFTKKGLGISYGRKKRSQRRRTPQSSKSHQDLIPEQPLSQQQGDQTGQKKQKEALESKTEADPCD</sequence>
<feature type="chain" id="PRO_0000244861" description="Protein Tat">
    <location>
        <begin position="1"/>
        <end position="101"/>
    </location>
</feature>
<feature type="region of interest" description="Transactivation" evidence="1">
    <location>
        <begin position="1"/>
        <end position="48"/>
    </location>
</feature>
<feature type="region of interest" description="Interaction with human CREBBP" evidence="1">
    <location>
        <begin position="1"/>
        <end position="24"/>
    </location>
</feature>
<feature type="region of interest" description="Disordered" evidence="2">
    <location>
        <begin position="1"/>
        <end position="20"/>
    </location>
</feature>
<feature type="region of interest" description="Cysteine-rich" evidence="1">
    <location>
        <begin position="22"/>
        <end position="37"/>
    </location>
</feature>
<feature type="region of interest" description="Core" evidence="1">
    <location>
        <begin position="38"/>
        <end position="48"/>
    </location>
</feature>
<feature type="region of interest" description="Disordered" evidence="2">
    <location>
        <begin position="48"/>
        <end position="101"/>
    </location>
</feature>
<feature type="region of interest" description="Interaction with the host capping enzyme RNGTT" evidence="1">
    <location>
        <begin position="49"/>
        <end position="86"/>
    </location>
</feature>
<feature type="short sequence motif" description="Nuclear localization signal, RNA-binding (TAR), and protein transduction" evidence="1">
    <location>
        <begin position="49"/>
        <end position="57"/>
    </location>
</feature>
<feature type="compositionally biased region" description="Basic and acidic residues" evidence="2">
    <location>
        <begin position="1"/>
        <end position="10"/>
    </location>
</feature>
<feature type="compositionally biased region" description="Basic residues" evidence="2">
    <location>
        <begin position="48"/>
        <end position="58"/>
    </location>
</feature>
<feature type="compositionally biased region" description="Basic and acidic residues" evidence="2">
    <location>
        <begin position="86"/>
        <end position="101"/>
    </location>
</feature>
<feature type="binding site" evidence="1">
    <location>
        <position position="22"/>
    </location>
    <ligand>
        <name>Zn(2+)</name>
        <dbReference type="ChEBI" id="CHEBI:29105"/>
        <label>1</label>
    </ligand>
</feature>
<feature type="binding site" evidence="1">
    <location>
        <position position="25"/>
    </location>
    <ligand>
        <name>Zn(2+)</name>
        <dbReference type="ChEBI" id="CHEBI:29105"/>
        <label>2</label>
    </ligand>
</feature>
<feature type="binding site" evidence="1">
    <location>
        <position position="27"/>
    </location>
    <ligand>
        <name>Zn(2+)</name>
        <dbReference type="ChEBI" id="CHEBI:29105"/>
        <label>2</label>
    </ligand>
</feature>
<feature type="binding site" evidence="1">
    <location>
        <position position="30"/>
    </location>
    <ligand>
        <name>Zn(2+)</name>
        <dbReference type="ChEBI" id="CHEBI:29105"/>
        <label>2</label>
    </ligand>
</feature>
<feature type="binding site" evidence="1">
    <location>
        <position position="33"/>
    </location>
    <ligand>
        <name>Zn(2+)</name>
        <dbReference type="ChEBI" id="CHEBI:29105"/>
        <label>1</label>
    </ligand>
</feature>
<feature type="binding site" evidence="1">
    <location>
        <position position="34"/>
    </location>
    <ligand>
        <name>Zn(2+)</name>
        <dbReference type="ChEBI" id="CHEBI:29105"/>
        <label>1</label>
    </ligand>
</feature>
<feature type="binding site" evidence="1">
    <location>
        <position position="37"/>
    </location>
    <ligand>
        <name>Zn(2+)</name>
        <dbReference type="ChEBI" id="CHEBI:29105"/>
        <label>1</label>
    </ligand>
</feature>
<feature type="site" description="Essential for Tat translocation through the endosomal membrane" evidence="1">
    <location>
        <position position="11"/>
    </location>
</feature>
<feature type="modified residue" description="N6-acetyllysine; by host PCAF" evidence="1">
    <location>
        <position position="28"/>
    </location>
</feature>
<feature type="modified residue" description="N6-acetyllysine; by host EP300 and GCN5L2" evidence="1">
    <location>
        <position position="50"/>
    </location>
</feature>
<feature type="modified residue" description="N6-acetyllysine; by host EP300 and GCN5L2" evidence="1">
    <location>
        <position position="51"/>
    </location>
</feature>
<feature type="modified residue" description="Asymmetric dimethylarginine; by host PRMT6" evidence="1">
    <location>
        <position position="52"/>
    </location>
</feature>
<feature type="splice variant" id="VSP_022433" description="In isoform Short.">
    <location>
        <begin position="73"/>
        <end position="101"/>
    </location>
</feature>
<evidence type="ECO:0000255" key="1">
    <source>
        <dbReference type="HAMAP-Rule" id="MF_04079"/>
    </source>
</evidence>
<evidence type="ECO:0000256" key="2">
    <source>
        <dbReference type="SAM" id="MobiDB-lite"/>
    </source>
</evidence>
<evidence type="ECO:0000305" key="3"/>
<comment type="function">
    <text evidence="1">Transcriptional activator that increases RNA Pol II processivity, thereby increasing the level of full-length viral transcripts. Recognizes a hairpin structure at the 5'-LTR of the nascent viral mRNAs referred to as the transactivation responsive RNA element (TAR) and recruits the cyclin T1-CDK9 complex (P-TEFb complex) that will in turn hyperphosphorylate the RNA polymerase II to allow efficient elongation. The CDK9 component of P-TEFb and other Tat-activated kinases hyperphosphorylate the C-terminus of RNA Pol II that becomes stabilized and much more processive. Other factors such as HTATSF1/Tat-SF1, SUPT5H/SPT5, and HTATIP2 are also important for Tat's function. Besides its effect on RNA Pol II processivity, Tat induces chromatin remodeling of proviral genes by recruiting the histone acetyltransferases (HATs) CREBBP, EP300 and PCAF to the chromatin. This also contributes to the increase in proviral transcription rate, especially when the provirus integrates in transcriptionally silent region of the host genome. To ensure maximal activation of the LTR, Tat mediates nuclear translocation of NF-kappa-B by interacting with host RELA. Through its interaction with host TBP, Tat may also modulate transcription initiation. Tat can reactivate a latently infected cell by penetrating in it and transactivating its LTR promoter. In the cytoplasm, Tat is thought to act as a translational activator of HIV-1 mRNAs.</text>
</comment>
<comment type="function">
    <text evidence="1">Extracellular circulating Tat can be endocytosed by surrounding uninfected cells via the binding to several surface receptors such as CD26, CXCR4, heparan sulfate proteoglycans (HSPG) or LDLR. Neurons are rarely infected, but they internalize Tat via their LDLR. Through its interaction with nuclear HATs, Tat is potentially able to control the acetylation-dependent cellular gene expression. Modulates the expression of many cellular genes involved in cell survival, proliferation or in coding for cytokines or cytokine receptors. Tat plays a role in T-cell and neurons apoptosis. Tat induced neurotoxicity and apoptosis probably contribute to neuroAIDS. Circulating Tat also acts as a chemokine-like and/or growth factor-like molecule that binds to specific receptors on the surface of the cells, affecting many cellular pathways. In the vascular system, Tat binds to ITGAV/ITGB3 and ITGA5/ITGB1 integrins dimers at the surface of endothelial cells and competes with bFGF for heparin-binding sites, leading to an excess of soluble bFGF.</text>
</comment>
<comment type="subunit">
    <text evidence="1">Interacts with host CCNT1. Associates with the P-TEFb complex composed at least of Tat, P-TEFb (CDK9 and CCNT1), TAR RNA, RNA Pol II. Recruits the HATs CREBBP, TAF1/TFIID, EP300, PCAF and GCN5L2. Interacts with host KAT5/Tip60; this interaction targets the latter to degradation. Interacts with the host deacetylase SIRT1. Interacts with host capping enzyme RNGTT; this interaction stimulates RNGTT. Binds to host KDR, and to the host integrins ITGAV/ITGB3 and ITGA5/ITGB1. Interacts with host KPNB1/importin beta-1 without previous binding to KPNA1/importin alpha-1. Interacts with EIF2AK2. Interacts with host nucleosome assembly protein NAP1L1; this interaction may be required for the transport of Tat within the nucleus, since the two proteins interact at the nuclear rim. Interacts with host C1QBP/SF2P32; this interaction involves lysine-acetylated Tat. Interacts with the host chemokine receptors CCR2, CCR3 and CXCR4. Interacts with host DPP4/CD26; this interaction may trigger an anti-proliferative effect. Interacts with host LDLR. Interacts with the host extracellular matrix metalloproteinase MMP1. Interacts with host PRMT6; this interaction mediates Tat's methylation. Interacts with, and is ubiquitinated by MDM2/Hdm2. Interacts with host PSMC3 and HTATIP2. Interacts with STAB1; this interaction may overcome SATB1-mediated repression of IL2 and IL2RA (interleukin) in T cells by binding to the same domain than HDAC1. Interacts (when acetylated) with human CDK13, thereby increasing HIV-1 mRNA splicing and promoting the production of the doubly spliced HIV-1 protein Nef. Interacts with host TBP; this interaction modulates the activity of transcriptional pre-initiation complex. Interacts with host RELA. Interacts with host PLSCR1; this interaction negatively regulates Tat transactivation activity by altering its subcellular distribution.</text>
</comment>
<comment type="subcellular location">
    <subcellularLocation>
        <location evidence="1">Host nucleus</location>
        <location evidence="1">Host nucleolus</location>
    </subcellularLocation>
    <subcellularLocation>
        <location evidence="1">Host cytoplasm</location>
    </subcellularLocation>
    <subcellularLocation>
        <location evidence="1">Secreted</location>
    </subcellularLocation>
    <text evidence="1">Probably localizes to both nuclear and nucleolar compartments. Nuclear localization is mediated through the interaction of the nuclear localization signal with importin KPNB1. Secretion occurs through a Golgi-independent pathway. Tat is released from infected cells to the extracellular space where it remains associated to the cell membrane, or is secreted into the cerebrospinal fluid and sera. Extracellular Tat can be endocytosed by surrounding uninfected cells via binding to several receptors depending on the cell type.</text>
</comment>
<comment type="alternative products">
    <event type="alternative splicing"/>
    <isoform>
        <id>O91083-1</id>
        <name>Long</name>
        <sequence type="displayed"/>
    </isoform>
    <isoform>
        <id>O91083-2</id>
        <name>Short</name>
        <sequence type="described" ref="VSP_022433"/>
    </isoform>
</comment>
<comment type="domain">
    <text evidence="1">The cell attachment site mediates the interaction with ITGAV/ITGB3 and ITGA5/ITGB1 integrins, leading to vascular cell migration and invasion. This interaction also provides endothelial cells with the adhesion signal they require to grow in response to mitogens.</text>
</comment>
<comment type="domain">
    <text evidence="1">The Cys-rich region may bind 2 zinc ions. This region is involved in binding to KAT5.</text>
</comment>
<comment type="domain">
    <text evidence="1">The transactivation domain mediates the interaction with CCNT1, GCN5L2, and MDM2.</text>
</comment>
<comment type="domain">
    <text evidence="1">The Arg-rich RNA-binding region binds the TAR RNA. This region also mediates the nuclear localization through direct binding to KPNB1 and is involved in Tat's transfer across cell membranes (protein transduction). The same region is required for the interaction with EP300, PCAF, EIF2AK2 and KDR.</text>
</comment>
<comment type="PTM">
    <text evidence="1">Asymmetrical arginine methylation by host PRMT6 seems to diminish the transactivation capacity of Tat and affects the interaction with host CCNT1.</text>
</comment>
<comment type="PTM">
    <text evidence="1">Acetylation by EP300, CREBBP, GCN5L2/GCN5 and PCAF regulates the transactivation activity of Tat. EP300-mediated acetylation of Lys-50 promotes dissociation of Tat from the TAR RNA through the competitive binding to PCAF's bromodomain. In addition, the non-acetylated Tat's N-terminus can also interact with PCAF. PCAF-mediated acetylation of Lys-28 enhances Tat's binding to CCNT1. Lys-50 is deacetylated by SIRT1.</text>
</comment>
<comment type="PTM">
    <text evidence="1">Polyubiquitination by host MDM2 does not target Tat to degradation, but activates its transactivation function and fosters interaction with CCNT1 and TAR RNA.</text>
</comment>
<comment type="PTM">
    <text evidence="1">Phosphorylated by EIF2AK2 on serine and threonine residues adjacent to the basic region important for TAR RNA binding and function. Phosphorylation of Tat by EIF2AK2 is dependent on the prior activation of EIF2AK2 by dsRNA.</text>
</comment>
<comment type="miscellaneous">
    <text evidence="1">HIV-1 lineages are divided in three main groups, M (for Major), O (for Outlier), and N (for New, or Non-M, Non-O). The vast majority of strains found worldwide belong to the group M. Group O seems to be endemic to and largely confined to Cameroon and neighboring countries in West Central Africa, where these viruses represent a small minority of HIV-1 strains. The group N is represented by a limited number of isolates from Cameroonian persons. The group M is further subdivided in 9 clades or subtypes (A to D, F to H, J and K).</text>
</comment>
<comment type="miscellaneous">
    <molecule>Isoform Short</molecule>
    <text evidence="3">Expressed in the late stage of the infection cycle, when unspliced viral RNAs are exported to the cytoplasm by the viral Rev protein.</text>
</comment>
<comment type="similarity">
    <text evidence="1">Belongs to the lentiviruses Tat family.</text>
</comment>
<dbReference type="EMBL" id="AJ006022">
    <property type="protein sequence ID" value="CAA06813.1"/>
    <property type="molecule type" value="Genomic_DNA"/>
</dbReference>
<dbReference type="SMR" id="O91083"/>
<dbReference type="Proteomes" id="UP000007420">
    <property type="component" value="Segment"/>
</dbReference>
<dbReference type="GO" id="GO:0005576">
    <property type="term" value="C:extracellular region"/>
    <property type="evidence" value="ECO:0007669"/>
    <property type="project" value="UniProtKB-SubCell"/>
</dbReference>
<dbReference type="GO" id="GO:0030430">
    <property type="term" value="C:host cell cytoplasm"/>
    <property type="evidence" value="ECO:0007669"/>
    <property type="project" value="UniProtKB-SubCell"/>
</dbReference>
<dbReference type="GO" id="GO:0044196">
    <property type="term" value="C:host cell nucleolus"/>
    <property type="evidence" value="ECO:0007669"/>
    <property type="project" value="UniProtKB-SubCell"/>
</dbReference>
<dbReference type="GO" id="GO:0042805">
    <property type="term" value="F:actinin binding"/>
    <property type="evidence" value="ECO:0007669"/>
    <property type="project" value="UniProtKB-UniRule"/>
</dbReference>
<dbReference type="GO" id="GO:0030332">
    <property type="term" value="F:cyclin binding"/>
    <property type="evidence" value="ECO:0007669"/>
    <property type="project" value="UniProtKB-UniRule"/>
</dbReference>
<dbReference type="GO" id="GO:0046872">
    <property type="term" value="F:metal ion binding"/>
    <property type="evidence" value="ECO:0007669"/>
    <property type="project" value="UniProtKB-UniRule"/>
</dbReference>
<dbReference type="GO" id="GO:0019904">
    <property type="term" value="F:protein domain specific binding"/>
    <property type="evidence" value="ECO:0007669"/>
    <property type="project" value="UniProtKB-UniRule"/>
</dbReference>
<dbReference type="GO" id="GO:0004865">
    <property type="term" value="F:protein serine/threonine phosphatase inhibitor activity"/>
    <property type="evidence" value="ECO:0007669"/>
    <property type="project" value="UniProtKB-KW"/>
</dbReference>
<dbReference type="GO" id="GO:0001070">
    <property type="term" value="F:RNA-binding transcription regulator activity"/>
    <property type="evidence" value="ECO:0007669"/>
    <property type="project" value="UniProtKB-UniRule"/>
</dbReference>
<dbReference type="GO" id="GO:1990970">
    <property type="term" value="F:trans-activation response element binding"/>
    <property type="evidence" value="ECO:0007669"/>
    <property type="project" value="UniProtKB-UniRule"/>
</dbReference>
<dbReference type="GO" id="GO:0006351">
    <property type="term" value="P:DNA-templated transcription"/>
    <property type="evidence" value="ECO:0007669"/>
    <property type="project" value="UniProtKB-UniRule"/>
</dbReference>
<dbReference type="GO" id="GO:0032968">
    <property type="term" value="P:positive regulation of transcription elongation by RNA polymerase II"/>
    <property type="evidence" value="ECO:0007669"/>
    <property type="project" value="UniProtKB-UniRule"/>
</dbReference>
<dbReference type="GO" id="GO:0050434">
    <property type="term" value="P:positive regulation of viral transcription"/>
    <property type="evidence" value="ECO:0007669"/>
    <property type="project" value="UniProtKB-UniRule"/>
</dbReference>
<dbReference type="GO" id="GO:0039525">
    <property type="term" value="P:symbiont-mediated perturbation of host chromatin organization"/>
    <property type="evidence" value="ECO:0007669"/>
    <property type="project" value="UniProtKB-UniRule"/>
</dbReference>
<dbReference type="GO" id="GO:0052170">
    <property type="term" value="P:symbiont-mediated suppression of host innate immune response"/>
    <property type="evidence" value="ECO:0007669"/>
    <property type="project" value="UniProtKB-KW"/>
</dbReference>
<dbReference type="GO" id="GO:0039606">
    <property type="term" value="P:symbiont-mediated suppression of host translation initiation"/>
    <property type="evidence" value="ECO:0007669"/>
    <property type="project" value="UniProtKB-KW"/>
</dbReference>
<dbReference type="GO" id="GO:0039502">
    <property type="term" value="P:symbiont-mediated suppression of host type I interferon-mediated signaling pathway"/>
    <property type="evidence" value="ECO:0007669"/>
    <property type="project" value="UniProtKB-UniRule"/>
</dbReference>
<dbReference type="Gene3D" id="4.10.20.10">
    <property type="entry name" value="Tat domain"/>
    <property type="match status" value="1"/>
</dbReference>
<dbReference type="HAMAP" id="MF_04079">
    <property type="entry name" value="HIV_TAT"/>
    <property type="match status" value="1"/>
</dbReference>
<dbReference type="InterPro" id="IPR001831">
    <property type="entry name" value="IV_Tat"/>
</dbReference>
<dbReference type="InterPro" id="IPR036963">
    <property type="entry name" value="Tat_dom_sf"/>
</dbReference>
<dbReference type="Pfam" id="PF00539">
    <property type="entry name" value="Tat"/>
    <property type="match status" value="1"/>
</dbReference>
<dbReference type="PRINTS" id="PR00055">
    <property type="entry name" value="HIVTATDOMAIN"/>
</dbReference>